<keyword id="KW-0012">Acyltransferase</keyword>
<keyword id="KW-1185">Reference proteome</keyword>
<keyword id="KW-0808">Transferase</keyword>
<comment type="function">
    <text evidence="1">Catalyzes the acetylation of L-2,4-diaminobutyrate (DABA) to gamma-N-acetyl-alpha,gamma-diaminobutyric acid (ADABA) with acetyl coenzyme A.</text>
</comment>
<comment type="catalytic activity">
    <reaction>
        <text>L-2,4-diaminobutanoate + acetyl-CoA = (2S)-4-acetamido-2-aminobutanoate + CoA + H(+)</text>
        <dbReference type="Rhea" id="RHEA:16901"/>
        <dbReference type="ChEBI" id="CHEBI:15378"/>
        <dbReference type="ChEBI" id="CHEBI:57287"/>
        <dbReference type="ChEBI" id="CHEBI:57288"/>
        <dbReference type="ChEBI" id="CHEBI:58761"/>
        <dbReference type="ChEBI" id="CHEBI:58929"/>
        <dbReference type="EC" id="2.3.1.178"/>
    </reaction>
</comment>
<comment type="pathway">
    <text>Amine and polyamine biosynthesis; ectoine biosynthesis; L-ectoine from L-aspartate 4-semialdehyde: step 2/3.</text>
</comment>
<comment type="similarity">
    <text evidence="3">Belongs to the acetyltransferase family. EctA subfamily.</text>
</comment>
<comment type="sequence caution" evidence="3">
    <conflict type="erroneous initiation">
        <sequence resource="EMBL-CDS" id="ABE59228"/>
    </conflict>
</comment>
<proteinExistence type="inferred from homology"/>
<name>ECTA_CHRSD</name>
<gene>
    <name type="primary">ectA</name>
    <name type="ordered locus">Csal_1876</name>
</gene>
<protein>
    <recommendedName>
        <fullName>L-2,4-diaminobutyric acid acetyltransferase</fullName>
        <shortName>DABA acetyltransferase</shortName>
        <ecNumber>2.3.1.178</ecNumber>
    </recommendedName>
</protein>
<organism>
    <name type="scientific">Chromohalobacter salexigens (strain ATCC BAA-138 / DSM 3043 / CIP 106854 / NCIMB 13768 / 1H11)</name>
    <dbReference type="NCBI Taxonomy" id="290398"/>
    <lineage>
        <taxon>Bacteria</taxon>
        <taxon>Pseudomonadati</taxon>
        <taxon>Pseudomonadota</taxon>
        <taxon>Gammaproteobacteria</taxon>
        <taxon>Oceanospirillales</taxon>
        <taxon>Halomonadaceae</taxon>
        <taxon>Chromohalobacter</taxon>
    </lineage>
</organism>
<sequence>MTPTTENFTPSADLARPSVADTVIGSAKKTLFIRKPTTDDGWGIYELVKACPPLDVNSGYAYLLLATQFRDTCAVATDEEGEIVGFVSGYVKRNAPDTYFLWQVAVGEKARGTGLARRLVEAVLMRPGMGDVRHLETTITPDNEASWGLFKRLADRWQAPLNSREYFSTGQLGGEHDPENLVRIGPFEPQQI</sequence>
<evidence type="ECO:0000250" key="1"/>
<evidence type="ECO:0000255" key="2">
    <source>
        <dbReference type="PROSITE-ProRule" id="PRU00532"/>
    </source>
</evidence>
<evidence type="ECO:0000305" key="3"/>
<feature type="chain" id="PRO_0000220085" description="L-2,4-diaminobutyric acid acetyltransferase">
    <location>
        <begin position="1"/>
        <end position="192"/>
    </location>
</feature>
<feature type="domain" description="N-acetyltransferase" evidence="2">
    <location>
        <begin position="31"/>
        <end position="192"/>
    </location>
</feature>
<dbReference type="EC" id="2.3.1.178"/>
<dbReference type="EMBL" id="AJ011103">
    <property type="protein sequence ID" value="CAA09483.1"/>
    <property type="molecule type" value="Genomic_DNA"/>
</dbReference>
<dbReference type="EMBL" id="CP000285">
    <property type="protein sequence ID" value="ABE59228.1"/>
    <property type="status" value="ALT_INIT"/>
    <property type="molecule type" value="Genomic_DNA"/>
</dbReference>
<dbReference type="RefSeq" id="WP_035409657.1">
    <property type="nucleotide sequence ID" value="NC_007963.1"/>
</dbReference>
<dbReference type="SMR" id="Q9ZEU8"/>
<dbReference type="STRING" id="290398.Csal_1876"/>
<dbReference type="GeneID" id="95334592"/>
<dbReference type="KEGG" id="csa:Csal_1876"/>
<dbReference type="eggNOG" id="COG0456">
    <property type="taxonomic scope" value="Bacteria"/>
</dbReference>
<dbReference type="HOGENOM" id="CLU_111896_0_0_6"/>
<dbReference type="OrthoDB" id="2436196at2"/>
<dbReference type="UniPathway" id="UPA00067">
    <property type="reaction ID" value="UER00122"/>
</dbReference>
<dbReference type="Proteomes" id="UP000000239">
    <property type="component" value="Chromosome"/>
</dbReference>
<dbReference type="GO" id="GO:0033816">
    <property type="term" value="F:diaminobutyrate acetyltransferase activity"/>
    <property type="evidence" value="ECO:0007669"/>
    <property type="project" value="UniProtKB-EC"/>
</dbReference>
<dbReference type="GO" id="GO:0019491">
    <property type="term" value="P:ectoine biosynthetic process"/>
    <property type="evidence" value="ECO:0007669"/>
    <property type="project" value="UniProtKB-UniPathway"/>
</dbReference>
<dbReference type="CDD" id="cd04301">
    <property type="entry name" value="NAT_SF"/>
    <property type="match status" value="1"/>
</dbReference>
<dbReference type="Gene3D" id="3.40.630.30">
    <property type="match status" value="1"/>
</dbReference>
<dbReference type="InterPro" id="IPR016181">
    <property type="entry name" value="Acyl_CoA_acyltransferase"/>
</dbReference>
<dbReference type="InterPro" id="IPR012772">
    <property type="entry name" value="Ectoine_EctA"/>
</dbReference>
<dbReference type="InterPro" id="IPR000182">
    <property type="entry name" value="GNAT_dom"/>
</dbReference>
<dbReference type="NCBIfam" id="TIGR02406">
    <property type="entry name" value="ectoine_EctA"/>
    <property type="match status" value="1"/>
</dbReference>
<dbReference type="Pfam" id="PF00583">
    <property type="entry name" value="Acetyltransf_1"/>
    <property type="match status" value="1"/>
</dbReference>
<dbReference type="SUPFAM" id="SSF55729">
    <property type="entry name" value="Acyl-CoA N-acyltransferases (Nat)"/>
    <property type="match status" value="1"/>
</dbReference>
<dbReference type="PROSITE" id="PS51186">
    <property type="entry name" value="GNAT"/>
    <property type="match status" value="1"/>
</dbReference>
<reference key="1">
    <citation type="journal article" date="1998" name="Syst. Appl. Microbiol.">
        <title>Characterization of the genes for the biosynthesis of the compatible solute ectoine in the moderately halophilic bacterium Halomonas elongata DSM 3043.</title>
        <authorList>
            <person name="Canovas D."/>
            <person name="Vargas C."/>
            <person name="Calderon M.I."/>
            <person name="Ventosa A."/>
            <person name="Nieto J.J."/>
        </authorList>
    </citation>
    <scope>NUCLEOTIDE SEQUENCE [GENOMIC DNA]</scope>
</reference>
<reference key="2">
    <citation type="journal article" date="2011" name="Stand. Genomic Sci.">
        <title>Complete genome sequence of the halophilic and highly halotolerant Chromohalobacter salexigens type strain (1H11(T)).</title>
        <authorList>
            <person name="Copeland A."/>
            <person name="O'Connor K."/>
            <person name="Lucas S."/>
            <person name="Lapidus A."/>
            <person name="Berry K.W."/>
            <person name="Detter J.C."/>
            <person name="Del Rio T.G."/>
            <person name="Hammon N."/>
            <person name="Dalin E."/>
            <person name="Tice H."/>
            <person name="Pitluck S."/>
            <person name="Bruce D."/>
            <person name="Goodwin L."/>
            <person name="Han C."/>
            <person name="Tapia R."/>
            <person name="Saunders E."/>
            <person name="Schmutz J."/>
            <person name="Brettin T."/>
            <person name="Larimer F."/>
            <person name="Land M."/>
            <person name="Hauser L."/>
            <person name="Vargas C."/>
            <person name="Nieto J.J."/>
            <person name="Kyrpides N.C."/>
            <person name="Ivanova N."/>
            <person name="Goker M."/>
            <person name="Klenk H.P."/>
            <person name="Csonka L.N."/>
            <person name="Woyke T."/>
        </authorList>
    </citation>
    <scope>NUCLEOTIDE SEQUENCE [LARGE SCALE GENOMIC DNA]</scope>
    <source>
        <strain>ATCC BAA-138 / DSM 3043 / CIP 106854 / NCIMB 13768 / 1H11</strain>
    </source>
</reference>
<accession>Q9ZEU8</accession>
<accession>Q1QWD0</accession>